<proteinExistence type="inferred from homology"/>
<accession>P57399</accession>
<sequence>MDKVKHSKIIILGSGPAGYTAAIYAARANLDPFLITGTNKGGQLMNTNEIENWPGDYNKISGSELMNRMYKHAIELKTKVICDTVISVNFKKNPFFLIGENNKYTADSVIIATGANPRYLGLQSESLFKGKGVSTCAVCDGFFYKNKEVAVVGGGNTAIEETLYLSNFVKKVHLIHRGINFRAEKILLDRLEKKIKSQKIIIYLNSIVKNILGNSSGVTALLIEQKNSKEKTESKIQVSGLFVAIGYTPNTNIFVNKLKMKDGYIQVTRQEHGNYTQTSIPGIFAAGDVIDHVYRQAITSSASGCMAALDSERYINSLV</sequence>
<reference key="1">
    <citation type="journal article" date="2000" name="Nature">
        <title>Genome sequence of the endocellular bacterial symbiont of aphids Buchnera sp. APS.</title>
        <authorList>
            <person name="Shigenobu S."/>
            <person name="Watanabe H."/>
            <person name="Hattori M."/>
            <person name="Sakaki Y."/>
            <person name="Ishikawa H."/>
        </authorList>
    </citation>
    <scope>NUCLEOTIDE SEQUENCE [LARGE SCALE GENOMIC DNA]</scope>
    <source>
        <strain>APS</strain>
    </source>
</reference>
<organism>
    <name type="scientific">Buchnera aphidicola subsp. Acyrthosiphon pisum (strain APS)</name>
    <name type="common">Acyrthosiphon pisum symbiotic bacterium</name>
    <dbReference type="NCBI Taxonomy" id="107806"/>
    <lineage>
        <taxon>Bacteria</taxon>
        <taxon>Pseudomonadati</taxon>
        <taxon>Pseudomonadota</taxon>
        <taxon>Gammaproteobacteria</taxon>
        <taxon>Enterobacterales</taxon>
        <taxon>Erwiniaceae</taxon>
        <taxon>Buchnera</taxon>
    </lineage>
</organism>
<keyword id="KW-0963">Cytoplasm</keyword>
<keyword id="KW-1015">Disulfide bond</keyword>
<keyword id="KW-0274">FAD</keyword>
<keyword id="KW-0285">Flavoprotein</keyword>
<keyword id="KW-0521">NADP</keyword>
<keyword id="KW-0560">Oxidoreductase</keyword>
<keyword id="KW-0676">Redox-active center</keyword>
<keyword id="KW-1185">Reference proteome</keyword>
<name>TRXB_BUCAI</name>
<dbReference type="EC" id="1.8.1.9"/>
<dbReference type="EMBL" id="BA000003">
    <property type="protein sequence ID" value="BAB13022.1"/>
    <property type="molecule type" value="Genomic_DNA"/>
</dbReference>
<dbReference type="RefSeq" id="NP_240136.1">
    <property type="nucleotide sequence ID" value="NC_002528.1"/>
</dbReference>
<dbReference type="RefSeq" id="WP_010896061.1">
    <property type="nucleotide sequence ID" value="NC_002528.1"/>
</dbReference>
<dbReference type="SMR" id="P57399"/>
<dbReference type="STRING" id="563178.BUAP5A_307"/>
<dbReference type="EnsemblBacteria" id="BAB13022">
    <property type="protein sequence ID" value="BAB13022"/>
    <property type="gene ID" value="BAB13022"/>
</dbReference>
<dbReference type="KEGG" id="buc:BU314"/>
<dbReference type="PATRIC" id="fig|107806.10.peg.326"/>
<dbReference type="eggNOG" id="COG0492">
    <property type="taxonomic scope" value="Bacteria"/>
</dbReference>
<dbReference type="HOGENOM" id="CLU_031864_5_1_6"/>
<dbReference type="Proteomes" id="UP000001806">
    <property type="component" value="Chromosome"/>
</dbReference>
<dbReference type="GO" id="GO:0005737">
    <property type="term" value="C:cytoplasm"/>
    <property type="evidence" value="ECO:0007669"/>
    <property type="project" value="UniProtKB-SubCell"/>
</dbReference>
<dbReference type="GO" id="GO:0004791">
    <property type="term" value="F:thioredoxin-disulfide reductase (NADPH) activity"/>
    <property type="evidence" value="ECO:0007669"/>
    <property type="project" value="UniProtKB-EC"/>
</dbReference>
<dbReference type="GO" id="GO:0019430">
    <property type="term" value="P:removal of superoxide radicals"/>
    <property type="evidence" value="ECO:0007669"/>
    <property type="project" value="InterPro"/>
</dbReference>
<dbReference type="Gene3D" id="3.50.50.60">
    <property type="entry name" value="FAD/NAD(P)-binding domain"/>
    <property type="match status" value="2"/>
</dbReference>
<dbReference type="InterPro" id="IPR036188">
    <property type="entry name" value="FAD/NAD-bd_sf"/>
</dbReference>
<dbReference type="InterPro" id="IPR023753">
    <property type="entry name" value="FAD/NAD-binding_dom"/>
</dbReference>
<dbReference type="InterPro" id="IPR050097">
    <property type="entry name" value="Ferredoxin-NADP_redctase_2"/>
</dbReference>
<dbReference type="InterPro" id="IPR008255">
    <property type="entry name" value="Pyr_nucl-diS_OxRdtase_2_AS"/>
</dbReference>
<dbReference type="InterPro" id="IPR005982">
    <property type="entry name" value="Thioredox_Rdtase"/>
</dbReference>
<dbReference type="NCBIfam" id="TIGR01292">
    <property type="entry name" value="TRX_reduct"/>
    <property type="match status" value="1"/>
</dbReference>
<dbReference type="PANTHER" id="PTHR48105">
    <property type="entry name" value="THIOREDOXIN REDUCTASE 1-RELATED-RELATED"/>
    <property type="match status" value="1"/>
</dbReference>
<dbReference type="Pfam" id="PF07992">
    <property type="entry name" value="Pyr_redox_2"/>
    <property type="match status" value="1"/>
</dbReference>
<dbReference type="PRINTS" id="PR00368">
    <property type="entry name" value="FADPNR"/>
</dbReference>
<dbReference type="PRINTS" id="PR00469">
    <property type="entry name" value="PNDRDTASEII"/>
</dbReference>
<dbReference type="SUPFAM" id="SSF51905">
    <property type="entry name" value="FAD/NAD(P)-binding domain"/>
    <property type="match status" value="1"/>
</dbReference>
<dbReference type="PROSITE" id="PS00573">
    <property type="entry name" value="PYRIDINE_REDOX_2"/>
    <property type="match status" value="1"/>
</dbReference>
<feature type="chain" id="PRO_0000166721" description="Thioredoxin reductase">
    <location>
        <begin position="1"/>
        <end position="319"/>
    </location>
</feature>
<feature type="binding site" evidence="1">
    <location>
        <begin position="36"/>
        <end position="43"/>
    </location>
    <ligand>
        <name>FAD</name>
        <dbReference type="ChEBI" id="CHEBI:57692"/>
    </ligand>
</feature>
<feature type="binding site" evidence="1">
    <location>
        <begin position="288"/>
        <end position="297"/>
    </location>
    <ligand>
        <name>FAD</name>
        <dbReference type="ChEBI" id="CHEBI:57692"/>
    </ligand>
</feature>
<feature type="disulfide bond" description="Redox-active" evidence="1">
    <location>
        <begin position="136"/>
        <end position="139"/>
    </location>
</feature>
<comment type="catalytic activity">
    <reaction>
        <text>[thioredoxin]-dithiol + NADP(+) = [thioredoxin]-disulfide + NADPH + H(+)</text>
        <dbReference type="Rhea" id="RHEA:20345"/>
        <dbReference type="Rhea" id="RHEA-COMP:10698"/>
        <dbReference type="Rhea" id="RHEA-COMP:10700"/>
        <dbReference type="ChEBI" id="CHEBI:15378"/>
        <dbReference type="ChEBI" id="CHEBI:29950"/>
        <dbReference type="ChEBI" id="CHEBI:50058"/>
        <dbReference type="ChEBI" id="CHEBI:57783"/>
        <dbReference type="ChEBI" id="CHEBI:58349"/>
        <dbReference type="EC" id="1.8.1.9"/>
    </reaction>
</comment>
<comment type="cofactor">
    <cofactor evidence="1">
        <name>FAD</name>
        <dbReference type="ChEBI" id="CHEBI:57692"/>
    </cofactor>
    <text evidence="1">Binds 1 FAD per subunit.</text>
</comment>
<comment type="subunit">
    <text evidence="1">Homodimer.</text>
</comment>
<comment type="subcellular location">
    <subcellularLocation>
        <location>Cytoplasm</location>
    </subcellularLocation>
</comment>
<comment type="miscellaneous">
    <text>The active site is a redox-active disulfide bond.</text>
</comment>
<comment type="similarity">
    <text evidence="2">Belongs to the class-II pyridine nucleotide-disulfide oxidoreductase family.</text>
</comment>
<gene>
    <name type="primary">trxB</name>
    <name type="ordered locus">BU314</name>
</gene>
<protein>
    <recommendedName>
        <fullName>Thioredoxin reductase</fullName>
        <shortName>TRXR</shortName>
        <ecNumber>1.8.1.9</ecNumber>
    </recommendedName>
</protein>
<evidence type="ECO:0000250" key="1">
    <source>
        <dbReference type="UniProtKB" id="P0A9P4"/>
    </source>
</evidence>
<evidence type="ECO:0000305" key="2"/>